<evidence type="ECO:0000255" key="1">
    <source>
        <dbReference type="HAMAP-Rule" id="MF_00444"/>
    </source>
</evidence>
<accession>C4XH03</accession>
<reference key="1">
    <citation type="journal article" date="2009" name="Genome Res.">
        <title>Whole genome sequence of Desulfovibrio magneticus strain RS-1 revealed common gene clusters in magnetotactic bacteria.</title>
        <authorList>
            <person name="Nakazawa H."/>
            <person name="Arakaki A."/>
            <person name="Narita-Yamada S."/>
            <person name="Yashiro I."/>
            <person name="Jinno K."/>
            <person name="Aoki N."/>
            <person name="Tsuruyama A."/>
            <person name="Okamura Y."/>
            <person name="Tanikawa S."/>
            <person name="Fujita N."/>
            <person name="Takeyama H."/>
            <person name="Matsunaga T."/>
        </authorList>
    </citation>
    <scope>NUCLEOTIDE SEQUENCE [LARGE SCALE GENOMIC DNA]</scope>
    <source>
        <strain>ATCC 700980 / DSM 13731 / RS-1</strain>
    </source>
</reference>
<organism>
    <name type="scientific">Solidesulfovibrio magneticus (strain ATCC 700980 / DSM 13731 / RS-1)</name>
    <name type="common">Desulfovibrio magneticus</name>
    <dbReference type="NCBI Taxonomy" id="573370"/>
    <lineage>
        <taxon>Bacteria</taxon>
        <taxon>Pseudomonadati</taxon>
        <taxon>Thermodesulfobacteriota</taxon>
        <taxon>Desulfovibrionia</taxon>
        <taxon>Desulfovibrionales</taxon>
        <taxon>Desulfovibrionaceae</taxon>
        <taxon>Solidesulfovibrio</taxon>
    </lineage>
</organism>
<proteinExistence type="inferred from homology"/>
<feature type="chain" id="PRO_1000206147" description="ATP-dependent Clp protease proteolytic subunit">
    <location>
        <begin position="1"/>
        <end position="202"/>
    </location>
</feature>
<feature type="active site" description="Nucleophile" evidence="1">
    <location>
        <position position="98"/>
    </location>
</feature>
<feature type="active site" evidence="1">
    <location>
        <position position="123"/>
    </location>
</feature>
<dbReference type="EC" id="3.4.21.92" evidence="1"/>
<dbReference type="EMBL" id="AP010904">
    <property type="protein sequence ID" value="BAH76308.1"/>
    <property type="molecule type" value="Genomic_DNA"/>
</dbReference>
<dbReference type="RefSeq" id="WP_015861473.1">
    <property type="nucleotide sequence ID" value="NC_012796.1"/>
</dbReference>
<dbReference type="SMR" id="C4XH03"/>
<dbReference type="STRING" id="573370.DMR_28170"/>
<dbReference type="MEROPS" id="S14.001"/>
<dbReference type="KEGG" id="dma:DMR_28170"/>
<dbReference type="eggNOG" id="COG0740">
    <property type="taxonomic scope" value="Bacteria"/>
</dbReference>
<dbReference type="HOGENOM" id="CLU_058707_3_2_7"/>
<dbReference type="OrthoDB" id="9802800at2"/>
<dbReference type="Proteomes" id="UP000009071">
    <property type="component" value="Chromosome"/>
</dbReference>
<dbReference type="GO" id="GO:0005737">
    <property type="term" value="C:cytoplasm"/>
    <property type="evidence" value="ECO:0007669"/>
    <property type="project" value="UniProtKB-SubCell"/>
</dbReference>
<dbReference type="GO" id="GO:0009368">
    <property type="term" value="C:endopeptidase Clp complex"/>
    <property type="evidence" value="ECO:0007669"/>
    <property type="project" value="TreeGrafter"/>
</dbReference>
<dbReference type="GO" id="GO:0004176">
    <property type="term" value="F:ATP-dependent peptidase activity"/>
    <property type="evidence" value="ECO:0007669"/>
    <property type="project" value="InterPro"/>
</dbReference>
<dbReference type="GO" id="GO:0051117">
    <property type="term" value="F:ATPase binding"/>
    <property type="evidence" value="ECO:0007669"/>
    <property type="project" value="TreeGrafter"/>
</dbReference>
<dbReference type="GO" id="GO:0004252">
    <property type="term" value="F:serine-type endopeptidase activity"/>
    <property type="evidence" value="ECO:0007669"/>
    <property type="project" value="UniProtKB-UniRule"/>
</dbReference>
<dbReference type="GO" id="GO:0006515">
    <property type="term" value="P:protein quality control for misfolded or incompletely synthesized proteins"/>
    <property type="evidence" value="ECO:0007669"/>
    <property type="project" value="TreeGrafter"/>
</dbReference>
<dbReference type="CDD" id="cd07017">
    <property type="entry name" value="S14_ClpP_2"/>
    <property type="match status" value="1"/>
</dbReference>
<dbReference type="FunFam" id="3.90.226.10:FF:000001">
    <property type="entry name" value="ATP-dependent Clp protease proteolytic subunit"/>
    <property type="match status" value="1"/>
</dbReference>
<dbReference type="Gene3D" id="3.90.226.10">
    <property type="entry name" value="2-enoyl-CoA Hydratase, Chain A, domain 1"/>
    <property type="match status" value="1"/>
</dbReference>
<dbReference type="HAMAP" id="MF_00444">
    <property type="entry name" value="ClpP"/>
    <property type="match status" value="1"/>
</dbReference>
<dbReference type="InterPro" id="IPR001907">
    <property type="entry name" value="ClpP"/>
</dbReference>
<dbReference type="InterPro" id="IPR029045">
    <property type="entry name" value="ClpP/crotonase-like_dom_sf"/>
</dbReference>
<dbReference type="InterPro" id="IPR023562">
    <property type="entry name" value="ClpP/TepA"/>
</dbReference>
<dbReference type="InterPro" id="IPR033135">
    <property type="entry name" value="ClpP_His_AS"/>
</dbReference>
<dbReference type="InterPro" id="IPR018215">
    <property type="entry name" value="ClpP_Ser_AS"/>
</dbReference>
<dbReference type="NCBIfam" id="TIGR00493">
    <property type="entry name" value="clpP"/>
    <property type="match status" value="1"/>
</dbReference>
<dbReference type="NCBIfam" id="NF001368">
    <property type="entry name" value="PRK00277.1"/>
    <property type="match status" value="1"/>
</dbReference>
<dbReference type="NCBIfam" id="NF009205">
    <property type="entry name" value="PRK12553.1"/>
    <property type="match status" value="1"/>
</dbReference>
<dbReference type="PANTHER" id="PTHR10381">
    <property type="entry name" value="ATP-DEPENDENT CLP PROTEASE PROTEOLYTIC SUBUNIT"/>
    <property type="match status" value="1"/>
</dbReference>
<dbReference type="PANTHER" id="PTHR10381:SF11">
    <property type="entry name" value="ATP-DEPENDENT CLP PROTEASE PROTEOLYTIC SUBUNIT, MITOCHONDRIAL"/>
    <property type="match status" value="1"/>
</dbReference>
<dbReference type="Pfam" id="PF00574">
    <property type="entry name" value="CLP_protease"/>
    <property type="match status" value="1"/>
</dbReference>
<dbReference type="PRINTS" id="PR00127">
    <property type="entry name" value="CLPPROTEASEP"/>
</dbReference>
<dbReference type="SUPFAM" id="SSF52096">
    <property type="entry name" value="ClpP/crotonase"/>
    <property type="match status" value="1"/>
</dbReference>
<dbReference type="PROSITE" id="PS00382">
    <property type="entry name" value="CLP_PROTEASE_HIS"/>
    <property type="match status" value="1"/>
</dbReference>
<dbReference type="PROSITE" id="PS00381">
    <property type="entry name" value="CLP_PROTEASE_SER"/>
    <property type="match status" value="1"/>
</dbReference>
<name>CLPP_SOLM1</name>
<keyword id="KW-0963">Cytoplasm</keyword>
<keyword id="KW-0378">Hydrolase</keyword>
<keyword id="KW-0645">Protease</keyword>
<keyword id="KW-0720">Serine protease</keyword>
<sequence>MATIPIVIETTGRTERAYDIYSRLLRDRIILLGSAVDDYVANLICAQLLFLESEDPEKEIFMYINSPGGVVSAGLAIYDTMQYVMPPVSTLCLGQAASMGALLLCAGATGMRYALPHSRIMIHQPSGGYQGQATDIEIHAKETRRTRETLNEIMAKHTGQSMERIQVDTERDNFMSAEEAVAYGLIDKVLTSRERLEKKDAE</sequence>
<protein>
    <recommendedName>
        <fullName evidence="1">ATP-dependent Clp protease proteolytic subunit</fullName>
        <ecNumber evidence="1">3.4.21.92</ecNumber>
    </recommendedName>
    <alternativeName>
        <fullName evidence="1">Endopeptidase Clp</fullName>
    </alternativeName>
</protein>
<gene>
    <name evidence="1" type="primary">clpP</name>
    <name type="ordered locus">DMR_28170</name>
</gene>
<comment type="function">
    <text evidence="1">Cleaves peptides in various proteins in a process that requires ATP hydrolysis. Has a chymotrypsin-like activity. Plays a major role in the degradation of misfolded proteins.</text>
</comment>
<comment type="catalytic activity">
    <reaction evidence="1">
        <text>Hydrolysis of proteins to small peptides in the presence of ATP and magnesium. alpha-casein is the usual test substrate. In the absence of ATP, only oligopeptides shorter than five residues are hydrolyzed (such as succinyl-Leu-Tyr-|-NHMec, and Leu-Tyr-Leu-|-Tyr-Trp, in which cleavage of the -Tyr-|-Leu- and -Tyr-|-Trp bonds also occurs).</text>
        <dbReference type="EC" id="3.4.21.92"/>
    </reaction>
</comment>
<comment type="subunit">
    <text evidence="1">Fourteen ClpP subunits assemble into 2 heptameric rings which stack back to back to give a disk-like structure with a central cavity, resembling the structure of eukaryotic proteasomes.</text>
</comment>
<comment type="subcellular location">
    <subcellularLocation>
        <location evidence="1">Cytoplasm</location>
    </subcellularLocation>
</comment>
<comment type="similarity">
    <text evidence="1">Belongs to the peptidase S14 family.</text>
</comment>